<sequence length="321" mass="35283">MLNNEYKNSSLKIFSLKGNEALAQEVADQVGIELGKCSVKRFSDGEIQINIEESIRGCDVFIIQPTSYPVNLHLMELLIMIDACKRASAATINIVVPYYGYARQDRKARSRKPITAKLVANLIETAGATRMIALDLHAPQIQGFFDIPIDHLMGVPILAKHFKDDPNINPEECVVVSPDHGGVTRARKLADILKTPIAIIDKRRPRPNVAEVMNIVGEIEGRTAIIIDDIIDTAGTITLAAQALKDKGAKEVYACCTHPVLSGPAKERIENSAIKELIVTNSIHLDEDRKPSNTKELSVAGLIAQAIIRVYERESVSVLFD</sequence>
<organism>
    <name type="scientific">Staphylococcus aureus (strain COL)</name>
    <dbReference type="NCBI Taxonomy" id="93062"/>
    <lineage>
        <taxon>Bacteria</taxon>
        <taxon>Bacillati</taxon>
        <taxon>Bacillota</taxon>
        <taxon>Bacilli</taxon>
        <taxon>Bacillales</taxon>
        <taxon>Staphylococcaceae</taxon>
        <taxon>Staphylococcus</taxon>
    </lineage>
</organism>
<feature type="chain" id="PRO_0000141186" description="Ribose-phosphate pyrophosphokinase">
    <location>
        <begin position="1"/>
        <end position="321"/>
    </location>
</feature>
<feature type="active site" evidence="1">
    <location>
        <position position="202"/>
    </location>
</feature>
<feature type="binding site" evidence="1">
    <location>
        <begin position="44"/>
        <end position="46"/>
    </location>
    <ligand>
        <name>ATP</name>
        <dbReference type="ChEBI" id="CHEBI:30616"/>
    </ligand>
</feature>
<feature type="binding site" evidence="1">
    <location>
        <begin position="103"/>
        <end position="104"/>
    </location>
    <ligand>
        <name>ATP</name>
        <dbReference type="ChEBI" id="CHEBI:30616"/>
    </ligand>
</feature>
<feature type="binding site" evidence="1">
    <location>
        <position position="137"/>
    </location>
    <ligand>
        <name>Mg(2+)</name>
        <dbReference type="ChEBI" id="CHEBI:18420"/>
        <label>1</label>
    </ligand>
</feature>
<feature type="binding site" evidence="1">
    <location>
        <position position="179"/>
    </location>
    <ligand>
        <name>Mg(2+)</name>
        <dbReference type="ChEBI" id="CHEBI:18420"/>
        <label>2</label>
    </ligand>
</feature>
<feature type="binding site" evidence="1">
    <location>
        <position position="204"/>
    </location>
    <ligand>
        <name>D-ribose 5-phosphate</name>
        <dbReference type="ChEBI" id="CHEBI:78346"/>
    </ligand>
</feature>
<feature type="binding site" evidence="1">
    <location>
        <position position="228"/>
    </location>
    <ligand>
        <name>D-ribose 5-phosphate</name>
        <dbReference type="ChEBI" id="CHEBI:78346"/>
    </ligand>
</feature>
<feature type="binding site" evidence="1">
    <location>
        <begin position="232"/>
        <end position="236"/>
    </location>
    <ligand>
        <name>D-ribose 5-phosphate</name>
        <dbReference type="ChEBI" id="CHEBI:78346"/>
    </ligand>
</feature>
<name>KPRS_STAAC</name>
<accession>Q5HIH5</accession>
<keyword id="KW-0067">ATP-binding</keyword>
<keyword id="KW-0963">Cytoplasm</keyword>
<keyword id="KW-0418">Kinase</keyword>
<keyword id="KW-0460">Magnesium</keyword>
<keyword id="KW-0479">Metal-binding</keyword>
<keyword id="KW-0545">Nucleotide biosynthesis</keyword>
<keyword id="KW-0547">Nucleotide-binding</keyword>
<keyword id="KW-0808">Transferase</keyword>
<protein>
    <recommendedName>
        <fullName evidence="1">Ribose-phosphate pyrophosphokinase</fullName>
        <shortName evidence="1">RPPK</shortName>
        <ecNumber evidence="1">2.7.6.1</ecNumber>
    </recommendedName>
    <alternativeName>
        <fullName evidence="1">5-phospho-D-ribosyl alpha-1-diphosphate synthase</fullName>
    </alternativeName>
    <alternativeName>
        <fullName evidence="1">Phosphoribosyl diphosphate synthase</fullName>
    </alternativeName>
    <alternativeName>
        <fullName evidence="1">Phosphoribosyl pyrophosphate synthase</fullName>
        <shortName evidence="1">P-Rib-PP synthase</shortName>
        <shortName evidence="1">PRPP synthase</shortName>
        <shortName evidence="1">PRPPase</shortName>
    </alternativeName>
</protein>
<gene>
    <name evidence="1" type="primary">prs</name>
    <name type="ordered locus">SACOL0544</name>
</gene>
<dbReference type="EC" id="2.7.6.1" evidence="1"/>
<dbReference type="EMBL" id="CP000046">
    <property type="protein sequence ID" value="AAW36321.1"/>
    <property type="molecule type" value="Genomic_DNA"/>
</dbReference>
<dbReference type="RefSeq" id="WP_000933775.1">
    <property type="nucleotide sequence ID" value="NC_002951.2"/>
</dbReference>
<dbReference type="SMR" id="Q5HIH5"/>
<dbReference type="KEGG" id="sac:SACOL0544"/>
<dbReference type="HOGENOM" id="CLU_033546_1_0_9"/>
<dbReference type="UniPathway" id="UPA00087">
    <property type="reaction ID" value="UER00172"/>
</dbReference>
<dbReference type="Proteomes" id="UP000000530">
    <property type="component" value="Chromosome"/>
</dbReference>
<dbReference type="GO" id="GO:0005737">
    <property type="term" value="C:cytoplasm"/>
    <property type="evidence" value="ECO:0007669"/>
    <property type="project" value="UniProtKB-SubCell"/>
</dbReference>
<dbReference type="GO" id="GO:0002189">
    <property type="term" value="C:ribose phosphate diphosphokinase complex"/>
    <property type="evidence" value="ECO:0007669"/>
    <property type="project" value="TreeGrafter"/>
</dbReference>
<dbReference type="GO" id="GO:0005524">
    <property type="term" value="F:ATP binding"/>
    <property type="evidence" value="ECO:0007669"/>
    <property type="project" value="UniProtKB-KW"/>
</dbReference>
<dbReference type="GO" id="GO:0016301">
    <property type="term" value="F:kinase activity"/>
    <property type="evidence" value="ECO:0007669"/>
    <property type="project" value="UniProtKB-KW"/>
</dbReference>
<dbReference type="GO" id="GO:0000287">
    <property type="term" value="F:magnesium ion binding"/>
    <property type="evidence" value="ECO:0007669"/>
    <property type="project" value="UniProtKB-UniRule"/>
</dbReference>
<dbReference type="GO" id="GO:0004749">
    <property type="term" value="F:ribose phosphate diphosphokinase activity"/>
    <property type="evidence" value="ECO:0007669"/>
    <property type="project" value="UniProtKB-UniRule"/>
</dbReference>
<dbReference type="GO" id="GO:0006015">
    <property type="term" value="P:5-phosphoribose 1-diphosphate biosynthetic process"/>
    <property type="evidence" value="ECO:0007669"/>
    <property type="project" value="UniProtKB-UniRule"/>
</dbReference>
<dbReference type="GO" id="GO:0006164">
    <property type="term" value="P:purine nucleotide biosynthetic process"/>
    <property type="evidence" value="ECO:0007669"/>
    <property type="project" value="TreeGrafter"/>
</dbReference>
<dbReference type="GO" id="GO:0009156">
    <property type="term" value="P:ribonucleoside monophosphate biosynthetic process"/>
    <property type="evidence" value="ECO:0007669"/>
    <property type="project" value="InterPro"/>
</dbReference>
<dbReference type="CDD" id="cd06223">
    <property type="entry name" value="PRTases_typeI"/>
    <property type="match status" value="1"/>
</dbReference>
<dbReference type="FunFam" id="3.40.50.2020:FF:000002">
    <property type="entry name" value="Ribose-phosphate pyrophosphokinase"/>
    <property type="match status" value="1"/>
</dbReference>
<dbReference type="FunFam" id="3.40.50.2020:FF:000014">
    <property type="entry name" value="Ribose-phosphate pyrophosphokinase 1"/>
    <property type="match status" value="1"/>
</dbReference>
<dbReference type="Gene3D" id="3.40.50.2020">
    <property type="match status" value="2"/>
</dbReference>
<dbReference type="HAMAP" id="MF_00583_B">
    <property type="entry name" value="RibP_PPkinase_B"/>
    <property type="match status" value="1"/>
</dbReference>
<dbReference type="InterPro" id="IPR000842">
    <property type="entry name" value="PRib_PP_synth_CS"/>
</dbReference>
<dbReference type="InterPro" id="IPR029099">
    <property type="entry name" value="Pribosyltran_N"/>
</dbReference>
<dbReference type="InterPro" id="IPR000836">
    <property type="entry name" value="PRibTrfase_dom"/>
</dbReference>
<dbReference type="InterPro" id="IPR029057">
    <property type="entry name" value="PRTase-like"/>
</dbReference>
<dbReference type="InterPro" id="IPR005946">
    <property type="entry name" value="Rib-P_diPkinase"/>
</dbReference>
<dbReference type="InterPro" id="IPR037515">
    <property type="entry name" value="Rib-P_diPkinase_bac"/>
</dbReference>
<dbReference type="NCBIfam" id="NF002320">
    <property type="entry name" value="PRK01259.1"/>
    <property type="match status" value="1"/>
</dbReference>
<dbReference type="NCBIfam" id="NF002618">
    <property type="entry name" value="PRK02269.1"/>
    <property type="match status" value="1"/>
</dbReference>
<dbReference type="NCBIfam" id="TIGR01251">
    <property type="entry name" value="ribP_PPkin"/>
    <property type="match status" value="1"/>
</dbReference>
<dbReference type="PANTHER" id="PTHR10210">
    <property type="entry name" value="RIBOSE-PHOSPHATE DIPHOSPHOKINASE FAMILY MEMBER"/>
    <property type="match status" value="1"/>
</dbReference>
<dbReference type="PANTHER" id="PTHR10210:SF41">
    <property type="entry name" value="RIBOSE-PHOSPHATE PYROPHOSPHOKINASE 1, CHLOROPLASTIC"/>
    <property type="match status" value="1"/>
</dbReference>
<dbReference type="Pfam" id="PF14572">
    <property type="entry name" value="Pribosyl_synth"/>
    <property type="match status" value="1"/>
</dbReference>
<dbReference type="Pfam" id="PF13793">
    <property type="entry name" value="Pribosyltran_N"/>
    <property type="match status" value="1"/>
</dbReference>
<dbReference type="SMART" id="SM01400">
    <property type="entry name" value="Pribosyltran_N"/>
    <property type="match status" value="1"/>
</dbReference>
<dbReference type="SUPFAM" id="SSF53271">
    <property type="entry name" value="PRTase-like"/>
    <property type="match status" value="1"/>
</dbReference>
<dbReference type="PROSITE" id="PS00114">
    <property type="entry name" value="PRPP_SYNTHASE"/>
    <property type="match status" value="1"/>
</dbReference>
<evidence type="ECO:0000255" key="1">
    <source>
        <dbReference type="HAMAP-Rule" id="MF_00583"/>
    </source>
</evidence>
<proteinExistence type="inferred from homology"/>
<comment type="function">
    <text evidence="1">Involved in the biosynthesis of the central metabolite phospho-alpha-D-ribosyl-1-pyrophosphate (PRPP) via the transfer of pyrophosphoryl group from ATP to 1-hydroxyl of ribose-5-phosphate (Rib-5-P).</text>
</comment>
<comment type="catalytic activity">
    <reaction evidence="1">
        <text>D-ribose 5-phosphate + ATP = 5-phospho-alpha-D-ribose 1-diphosphate + AMP + H(+)</text>
        <dbReference type="Rhea" id="RHEA:15609"/>
        <dbReference type="ChEBI" id="CHEBI:15378"/>
        <dbReference type="ChEBI" id="CHEBI:30616"/>
        <dbReference type="ChEBI" id="CHEBI:58017"/>
        <dbReference type="ChEBI" id="CHEBI:78346"/>
        <dbReference type="ChEBI" id="CHEBI:456215"/>
        <dbReference type="EC" id="2.7.6.1"/>
    </reaction>
</comment>
<comment type="cofactor">
    <cofactor evidence="1">
        <name>Mg(2+)</name>
        <dbReference type="ChEBI" id="CHEBI:18420"/>
    </cofactor>
    <text evidence="1">Binds 2 Mg(2+) ions per subunit.</text>
</comment>
<comment type="pathway">
    <text evidence="1">Metabolic intermediate biosynthesis; 5-phospho-alpha-D-ribose 1-diphosphate biosynthesis; 5-phospho-alpha-D-ribose 1-diphosphate from D-ribose 5-phosphate (route I): step 1/1.</text>
</comment>
<comment type="subunit">
    <text evidence="1">Homohexamer.</text>
</comment>
<comment type="subcellular location">
    <subcellularLocation>
        <location evidence="1">Cytoplasm</location>
    </subcellularLocation>
</comment>
<comment type="similarity">
    <text evidence="1">Belongs to the ribose-phosphate pyrophosphokinase family. Class I subfamily.</text>
</comment>
<reference key="1">
    <citation type="journal article" date="2005" name="J. Bacteriol.">
        <title>Insights on evolution of virulence and resistance from the complete genome analysis of an early methicillin-resistant Staphylococcus aureus strain and a biofilm-producing methicillin-resistant Staphylococcus epidermidis strain.</title>
        <authorList>
            <person name="Gill S.R."/>
            <person name="Fouts D.E."/>
            <person name="Archer G.L."/>
            <person name="Mongodin E.F."/>
            <person name="DeBoy R.T."/>
            <person name="Ravel J."/>
            <person name="Paulsen I.T."/>
            <person name="Kolonay J.F."/>
            <person name="Brinkac L.M."/>
            <person name="Beanan M.J."/>
            <person name="Dodson R.J."/>
            <person name="Daugherty S.C."/>
            <person name="Madupu R."/>
            <person name="Angiuoli S.V."/>
            <person name="Durkin A.S."/>
            <person name="Haft D.H."/>
            <person name="Vamathevan J.J."/>
            <person name="Khouri H."/>
            <person name="Utterback T.R."/>
            <person name="Lee C."/>
            <person name="Dimitrov G."/>
            <person name="Jiang L."/>
            <person name="Qin H."/>
            <person name="Weidman J."/>
            <person name="Tran K."/>
            <person name="Kang K.H."/>
            <person name="Hance I.R."/>
            <person name="Nelson K.E."/>
            <person name="Fraser C.M."/>
        </authorList>
    </citation>
    <scope>NUCLEOTIDE SEQUENCE [LARGE SCALE GENOMIC DNA]</scope>
    <source>
        <strain>COL</strain>
    </source>
</reference>